<dbReference type="EMBL" id="BC102307">
    <property type="protein sequence ID" value="AAI02308.1"/>
    <property type="molecule type" value="mRNA"/>
</dbReference>
<dbReference type="RefSeq" id="NP_001030265.1">
    <property type="nucleotide sequence ID" value="NM_001035093.2"/>
</dbReference>
<dbReference type="SMR" id="Q3T0P7"/>
<dbReference type="FunCoup" id="Q3T0P7">
    <property type="interactions" value="1954"/>
</dbReference>
<dbReference type="STRING" id="9913.ENSBTAP00000004044"/>
<dbReference type="GlyCosmos" id="Q3T0P7">
    <property type="glycosylation" value="1 site, No reported glycans"/>
</dbReference>
<dbReference type="GlyGen" id="Q3T0P7">
    <property type="glycosylation" value="1 site"/>
</dbReference>
<dbReference type="PaxDb" id="9913-ENSBTAP00000004044"/>
<dbReference type="GeneID" id="510575"/>
<dbReference type="KEGG" id="bta:510575"/>
<dbReference type="CTD" id="9445"/>
<dbReference type="eggNOG" id="KOG4681">
    <property type="taxonomic scope" value="Eukaryota"/>
</dbReference>
<dbReference type="InParanoid" id="Q3T0P7"/>
<dbReference type="OrthoDB" id="9982095at2759"/>
<dbReference type="Proteomes" id="UP000009136">
    <property type="component" value="Unplaced"/>
</dbReference>
<dbReference type="GO" id="GO:0010008">
    <property type="term" value="C:endosome membrane"/>
    <property type="evidence" value="ECO:0007669"/>
    <property type="project" value="UniProtKB-SubCell"/>
</dbReference>
<dbReference type="GO" id="GO:0005615">
    <property type="term" value="C:extracellular space"/>
    <property type="evidence" value="ECO:0000250"/>
    <property type="project" value="UniProtKB"/>
</dbReference>
<dbReference type="GO" id="GO:0005794">
    <property type="term" value="C:Golgi apparatus"/>
    <property type="evidence" value="ECO:0000318"/>
    <property type="project" value="GO_Central"/>
</dbReference>
<dbReference type="GO" id="GO:0000139">
    <property type="term" value="C:Golgi membrane"/>
    <property type="evidence" value="ECO:0007669"/>
    <property type="project" value="UniProtKB-SubCell"/>
</dbReference>
<dbReference type="GO" id="GO:0030660">
    <property type="term" value="C:Golgi-associated vesicle membrane"/>
    <property type="evidence" value="ECO:0000250"/>
    <property type="project" value="UniProtKB"/>
</dbReference>
<dbReference type="GO" id="GO:0031090">
    <property type="term" value="C:organelle membrane"/>
    <property type="evidence" value="ECO:0000250"/>
    <property type="project" value="UniProtKB"/>
</dbReference>
<dbReference type="GO" id="GO:0005886">
    <property type="term" value="C:plasma membrane"/>
    <property type="evidence" value="ECO:0000250"/>
    <property type="project" value="UniProtKB"/>
</dbReference>
<dbReference type="GO" id="GO:0001540">
    <property type="term" value="F:amyloid-beta binding"/>
    <property type="evidence" value="ECO:0000318"/>
    <property type="project" value="GO_Central"/>
</dbReference>
<dbReference type="GO" id="GO:0042985">
    <property type="term" value="P:negative regulation of amyloid precursor protein biosynthetic process"/>
    <property type="evidence" value="ECO:0000250"/>
    <property type="project" value="UniProtKB"/>
</dbReference>
<dbReference type="InterPro" id="IPR007084">
    <property type="entry name" value="BRICHOS_dom"/>
</dbReference>
<dbReference type="InterPro" id="IPR040145">
    <property type="entry name" value="ITM2"/>
</dbReference>
<dbReference type="PANTHER" id="PTHR10962:SF4">
    <property type="entry name" value="INTEGRAL MEMBRANE PROTEIN 2B"/>
    <property type="match status" value="1"/>
</dbReference>
<dbReference type="PANTHER" id="PTHR10962">
    <property type="entry name" value="INTEGRAL TRANSMEMBRANE PROTEIN 2"/>
    <property type="match status" value="1"/>
</dbReference>
<dbReference type="Pfam" id="PF04089">
    <property type="entry name" value="BRICHOS"/>
    <property type="match status" value="1"/>
</dbReference>
<dbReference type="SMART" id="SM01039">
    <property type="entry name" value="BRICHOS"/>
    <property type="match status" value="1"/>
</dbReference>
<dbReference type="PROSITE" id="PS50869">
    <property type="entry name" value="BRICHOS"/>
    <property type="match status" value="1"/>
</dbReference>
<gene>
    <name type="primary">ITM2B</name>
</gene>
<evidence type="ECO:0000250" key="1"/>
<evidence type="ECO:0000250" key="2">
    <source>
        <dbReference type="UniProtKB" id="O89051"/>
    </source>
</evidence>
<evidence type="ECO:0000250" key="3">
    <source>
        <dbReference type="UniProtKB" id="Q9Y287"/>
    </source>
</evidence>
<evidence type="ECO:0000255" key="4"/>
<evidence type="ECO:0000255" key="5">
    <source>
        <dbReference type="PROSITE-ProRule" id="PRU00255"/>
    </source>
</evidence>
<evidence type="ECO:0000305" key="6"/>
<accession>Q3T0P7</accession>
<sequence length="266" mass="30400">MVKVTFNSALAQKEAKKDESKSGEEALIIPPDAVAVDCKDPDEVVPVGQRRAWCWCMCFGLAFMLAGVILGGAYLYKYFAFQPDDVYYCGIKYIKDDVILNEPSADAPASRYQTIEENIKIFEEDEVEFISVPVPEFADSDPANIVHDFNKKLTAYLDLNLDKCYVIPLNTSIVMPPKNLLELLINIKAGTYLPQSYLIHEHMVITDRIENIDHLGFYIYRLCHDKETYKLQRRETIKGIQKRSADVCVTIRHFENRFAVETLICP</sequence>
<feature type="chain" id="PRO_0000154820" description="Integral membrane protein 2B">
    <location>
        <begin position="1"/>
        <end position="266"/>
    </location>
</feature>
<feature type="chain" id="PRO_0000417460" description="BRI2, membrane form" evidence="1">
    <location>
        <begin position="1"/>
        <end position="243"/>
    </location>
</feature>
<feature type="chain" id="PRO_0000417461" description="BRI2 intracellular domain" evidence="1">
    <location>
        <begin position="1"/>
        <end status="unknown"/>
    </location>
</feature>
<feature type="chain" id="PRO_0000417462" description="BRI2C, soluble form" evidence="1">
    <location>
        <begin status="unknown"/>
        <end position="243"/>
    </location>
</feature>
<feature type="peptide" id="PRO_0000417463" description="Bri23 peptide" evidence="1">
    <location>
        <begin position="244"/>
        <end position="266"/>
    </location>
</feature>
<feature type="topological domain" description="Cytoplasmic" evidence="4">
    <location>
        <begin position="1"/>
        <end position="54"/>
    </location>
</feature>
<feature type="transmembrane region" description="Helical; Signal-anchor for type II membrane protein" evidence="4">
    <location>
        <begin position="55"/>
        <end position="75"/>
    </location>
</feature>
<feature type="topological domain" description="Lumenal" evidence="4">
    <location>
        <begin position="76"/>
        <end position="266"/>
    </location>
</feature>
<feature type="domain" description="BRICHOS" evidence="5">
    <location>
        <begin position="137"/>
        <end position="231"/>
    </location>
</feature>
<feature type="region of interest" description="Necessary for interaction with APP and inhibitor effects on APP processing" evidence="1">
    <location>
        <begin position="102"/>
        <end position="134"/>
    </location>
</feature>
<feature type="site" description="Cleavage; by furin" evidence="1">
    <location>
        <begin position="243"/>
        <end position="244"/>
    </location>
</feature>
<feature type="glycosylation site" description="N-linked (GlcNAc...) asparagine" evidence="4">
    <location>
        <position position="170"/>
    </location>
</feature>
<feature type="disulfide bond" description="Interchain" evidence="1">
    <location>
        <position position="89"/>
    </location>
</feature>
<feature type="disulfide bond" evidence="1">
    <location>
        <begin position="164"/>
        <end position="223"/>
    </location>
</feature>
<feature type="disulfide bond" evidence="1">
    <location>
        <begin position="248"/>
        <end position="265"/>
    </location>
</feature>
<reference key="1">
    <citation type="submission" date="2005-08" db="EMBL/GenBank/DDBJ databases">
        <authorList>
            <consortium name="NIH - Mammalian Gene Collection (MGC) project"/>
        </authorList>
    </citation>
    <scope>NUCLEOTIDE SEQUENCE [LARGE SCALE MRNA]</scope>
    <source>
        <strain>Crossbred X Angus</strain>
        <tissue>Ileum</tissue>
    </source>
</reference>
<proteinExistence type="evidence at transcript level"/>
<organism>
    <name type="scientific">Bos taurus</name>
    <name type="common">Bovine</name>
    <dbReference type="NCBI Taxonomy" id="9913"/>
    <lineage>
        <taxon>Eukaryota</taxon>
        <taxon>Metazoa</taxon>
        <taxon>Chordata</taxon>
        <taxon>Craniata</taxon>
        <taxon>Vertebrata</taxon>
        <taxon>Euteleostomi</taxon>
        <taxon>Mammalia</taxon>
        <taxon>Eutheria</taxon>
        <taxon>Laurasiatheria</taxon>
        <taxon>Artiodactyla</taxon>
        <taxon>Ruminantia</taxon>
        <taxon>Pecora</taxon>
        <taxon>Bovidae</taxon>
        <taxon>Bovinae</taxon>
        <taxon>Bos</taxon>
    </lineage>
</organism>
<comment type="function">
    <text evidence="1">Plays a regulatory role in the processing of the amyloid-beta A4 precursor protein (APP) and acts as an inhibitor of the amyloid-beta peptide aggregation and fibrils deposition. Plays a role in the induction of neurite outgrowth. Functions as a protease inhibitor by blocking access of secretases to APP cleavage sites (By similarity).</text>
</comment>
<comment type="function">
    <text evidence="1">Mature BRI2 (mBRI2) functions as a modulator of the amyloid-beta A4 precursor protein (APP) processing leading to a strong reduction in the secretion of secretase-processed amyloid-beta protein 40 and amyloid-beta protein 42.</text>
</comment>
<comment type="function">
    <text evidence="1">Bri23 peptide prevents aggregation of APP amyloid-beta protein 42 into toxic oligomers.</text>
</comment>
<comment type="subunit">
    <text evidence="1 2">Homodimer; disulfide-linked. Interacts with SPPL2A and SPPL2B. Interacts with APP. Mature BRI2 (mBRI2) interacts with the APP amyloid-beta A4 protein; the interaction occurs at the cell surface and in the endocytic compartments and enable alpha- and beta-secretase-induced APP cleavage inhibition. Mature BRI2 (mBRI2) interacts with the APP C99; the interaction occurs in the endocytic compartments and enable gamma-secretase-induced C99 cleavage inhibition. May form heterodimers with Bri23 peptide and APP amyloid-beta protein 40 (By similarity). Interacts with ADAM7 in sperm; the interaction increases following capacitation (By similarity).</text>
</comment>
<comment type="subcellular location">
    <molecule>Integral membrane protein 2B</molecule>
    <subcellularLocation>
        <location evidence="3">Golgi apparatus membrane</location>
        <topology evidence="3">Single-pass type II membrane protein</topology>
    </subcellularLocation>
    <text evidence="3">Immature BRI2 (imBRI2) is cleaved by furin in the Golgi into mBRI2 and a Bri23 peptide. mBRI2 is transported to the plasma membrane and Bri23 peptide is secreted.</text>
</comment>
<comment type="subcellular location">
    <molecule>BRI2, membrane form</molecule>
    <subcellularLocation>
        <location evidence="3">Cell membrane</location>
        <topology evidence="3">Single-pass type II membrane protein</topology>
    </subcellularLocation>
    <subcellularLocation>
        <location evidence="3">Endosome membrane</location>
        <topology evidence="3">Single-pass type II membrane protein</topology>
    </subcellularLocation>
    <text evidence="3">Mature BRI2 (mBRI2) needs to be transported from the endoplasmic reticulum compartment to the cell membrane in order to be able to inhibit APP processing.</text>
</comment>
<comment type="subcellular location">
    <molecule>Bri23 peptide</molecule>
    <subcellularLocation>
        <location evidence="3">Secreted</location>
    </subcellularLocation>
    <text evidence="3">Detected in the cerebral spinal fluid (CSF).</text>
</comment>
<comment type="subcellular location">
    <molecule>BRI2C, soluble form</molecule>
    <subcellularLocation>
        <location evidence="3">Secreted</location>
    </subcellularLocation>
</comment>
<comment type="PTM">
    <text evidence="1">The ectodomain C-terminal part of the imBRI2 is processed by furin producing a secreted Bri23 peptide and a mature BRI2, membrane form (mBRI2). The remaining part of the ectodomain of mBRI2 containing the BRICHOS domain is cleaved by ADAM10 and is secreted (BRI2C, soluble form). The membrane-bound N-terminal fragment (BRI2C, membrane form) is further proteolytically processed by SPPL2A and SPPL2B through regulated intramembrane proteolysis producing a secreted C-peptide and a BRI2 intracellular domain (BRI2 ICD) released in the cytosol. Shedding by ADAM10 facilitates intramembrane cleavage but is not absolutely required for BRI2 ICD generation (By similarity).</text>
</comment>
<comment type="PTM">
    <text evidence="1">Glycosylation at Asn-170 is important for cell surface localization, but doesn't affect furin- and ADAM10-induced proteolytic processing.</text>
</comment>
<comment type="similarity">
    <text evidence="6">Belongs to the ITM2 family.</text>
</comment>
<keyword id="KW-1003">Cell membrane</keyword>
<keyword id="KW-1015">Disulfide bond</keyword>
<keyword id="KW-0967">Endosome</keyword>
<keyword id="KW-0325">Glycoprotein</keyword>
<keyword id="KW-0333">Golgi apparatus</keyword>
<keyword id="KW-0472">Membrane</keyword>
<keyword id="KW-1185">Reference proteome</keyword>
<keyword id="KW-0964">Secreted</keyword>
<keyword id="KW-0735">Signal-anchor</keyword>
<keyword id="KW-0812">Transmembrane</keyword>
<keyword id="KW-1133">Transmembrane helix</keyword>
<name>ITM2B_BOVIN</name>
<protein>
    <recommendedName>
        <fullName>Integral membrane protein 2B</fullName>
    </recommendedName>
    <alternativeName>
        <fullName>Immature BRI2</fullName>
        <shortName>imBRI2</shortName>
    </alternativeName>
    <alternativeName>
        <fullName>Transmembrane protein BRI</fullName>
        <shortName>Bri</shortName>
    </alternativeName>
    <component>
        <recommendedName>
            <fullName>BRI2, membrane form</fullName>
        </recommendedName>
        <alternativeName>
            <fullName>Mature BRI2</fullName>
            <shortName>mBRI2</shortName>
        </alternativeName>
    </component>
    <component>
        <recommendedName>
            <fullName>BRI2 intracellular domain</fullName>
            <shortName>BRI2 ICD</shortName>
        </recommendedName>
    </component>
    <component>
        <recommendedName>
            <fullName>BRI2C, soluble form</fullName>
        </recommendedName>
    </component>
    <component>
        <recommendedName>
            <fullName>Bri23 peptide</fullName>
            <shortName>Bri2-23</shortName>
        </recommendedName>
        <alternativeName>
            <fullName>ABri23</fullName>
        </alternativeName>
        <alternativeName>
            <fullName>C-terminal peptide</fullName>
        </alternativeName>
        <alternativeName>
            <fullName>P23 peptide</fullName>
        </alternativeName>
    </component>
</protein>